<protein>
    <recommendedName>
        <fullName evidence="1">UPF0412 protein YaaI</fullName>
    </recommendedName>
</protein>
<organism>
    <name type="scientific">Salmonella paratyphi B (strain ATCC BAA-1250 / SPB7)</name>
    <dbReference type="NCBI Taxonomy" id="1016998"/>
    <lineage>
        <taxon>Bacteria</taxon>
        <taxon>Pseudomonadati</taxon>
        <taxon>Pseudomonadota</taxon>
        <taxon>Gammaproteobacteria</taxon>
        <taxon>Enterobacterales</taxon>
        <taxon>Enterobacteriaceae</taxon>
        <taxon>Salmonella</taxon>
    </lineage>
</organism>
<reference key="1">
    <citation type="submission" date="2007-11" db="EMBL/GenBank/DDBJ databases">
        <authorList>
            <consortium name="The Salmonella enterica serovar Paratyphi B Genome Sequencing Project"/>
            <person name="McClelland M."/>
            <person name="Sanderson E.K."/>
            <person name="Porwollik S."/>
            <person name="Spieth J."/>
            <person name="Clifton W.S."/>
            <person name="Fulton R."/>
            <person name="Cordes M."/>
            <person name="Wollam A."/>
            <person name="Shah N."/>
            <person name="Pepin K."/>
            <person name="Bhonagiri V."/>
            <person name="Nash W."/>
            <person name="Johnson M."/>
            <person name="Thiruvilangam P."/>
            <person name="Wilson R."/>
        </authorList>
    </citation>
    <scope>NUCLEOTIDE SEQUENCE [LARGE SCALE GENOMIC DNA]</scope>
    <source>
        <strain>ATCC BAA-1250 / SPB7</strain>
    </source>
</reference>
<gene>
    <name evidence="1" type="primary">yaaI</name>
    <name type="ordered locus">SPAB_00012</name>
</gene>
<feature type="signal peptide" evidence="1">
    <location>
        <begin position="1"/>
        <end position="23"/>
    </location>
</feature>
<feature type="chain" id="PRO_1000087273" description="UPF0412 protein YaaI">
    <location>
        <begin position="24"/>
        <end position="134"/>
    </location>
</feature>
<evidence type="ECO:0000255" key="1">
    <source>
        <dbReference type="HAMAP-Rule" id="MF_01372"/>
    </source>
</evidence>
<dbReference type="EMBL" id="CP000886">
    <property type="protein sequence ID" value="ABX65456.1"/>
    <property type="molecule type" value="Genomic_DNA"/>
</dbReference>
<dbReference type="RefSeq" id="WP_001258091.1">
    <property type="nucleotide sequence ID" value="NC_010102.1"/>
</dbReference>
<dbReference type="KEGG" id="spq:SPAB_00012"/>
<dbReference type="PATRIC" id="fig|1016998.12.peg.11"/>
<dbReference type="HOGENOM" id="CLU_158661_0_0_6"/>
<dbReference type="BioCyc" id="SENT1016998:SPAB_RS00060-MONOMER"/>
<dbReference type="Proteomes" id="UP000008556">
    <property type="component" value="Chromosome"/>
</dbReference>
<dbReference type="HAMAP" id="MF_01372">
    <property type="entry name" value="UPF0412"/>
    <property type="match status" value="1"/>
</dbReference>
<dbReference type="InterPro" id="IPR020240">
    <property type="entry name" value="UPF0412_YaaI"/>
</dbReference>
<dbReference type="NCBIfam" id="NF007541">
    <property type="entry name" value="PRK10154.1"/>
    <property type="match status" value="1"/>
</dbReference>
<dbReference type="Pfam" id="PF10807">
    <property type="entry name" value="DUF2541"/>
    <property type="match status" value="1"/>
</dbReference>
<comment type="similarity">
    <text evidence="1">Belongs to the UPF0412 family.</text>
</comment>
<name>YAAI_SALPB</name>
<keyword id="KW-0732">Signal</keyword>
<accession>A9MXI0</accession>
<sequence>MRSVLTISASLLFGLALSSVAHANDHKILGVIAMPRNETNDLTLKTPVCRIVKRIQLTADHGDIELSGASVYFKTARSASQSLNVPSSIKEGQTTGWININSDNDNKRCVSKITFSGHTVNSSDMARLKVIGDD</sequence>
<proteinExistence type="inferred from homology"/>